<proteinExistence type="evidence at protein level"/>
<protein>
    <recommendedName>
        <fullName>Meiotically up-regulated gene 84 protein</fullName>
    </recommendedName>
</protein>
<keyword id="KW-0256">Endoplasmic reticulum</keyword>
<keyword id="KW-0469">Meiosis</keyword>
<keyword id="KW-0472">Membrane</keyword>
<keyword id="KW-1185">Reference proteome</keyword>
<keyword id="KW-0812">Transmembrane</keyword>
<keyword id="KW-1133">Transmembrane helix</keyword>
<comment type="function">
    <text evidence="2">Has a role in meiosis.</text>
</comment>
<comment type="subcellular location">
    <subcellularLocation>
        <location evidence="3">Endoplasmic reticulum membrane</location>
        <topology evidence="3">Multi-pass membrane protein</topology>
    </subcellularLocation>
</comment>
<dbReference type="EMBL" id="CU329670">
    <property type="protein sequence ID" value="CAB16583.3"/>
    <property type="molecule type" value="Genomic_DNA"/>
</dbReference>
<dbReference type="PIR" id="T38153">
    <property type="entry name" value="T38153"/>
</dbReference>
<dbReference type="RefSeq" id="NP_593243.2">
    <property type="nucleotide sequence ID" value="NM_001018640.2"/>
</dbReference>
<dbReference type="BioGRID" id="278216">
    <property type="interactions" value="1"/>
</dbReference>
<dbReference type="ComplexPortal" id="CPX-10121">
    <property type="entry name" value="Glycosylphosphatidylinositol-N-acetylglucosaminyltransferase complex"/>
</dbReference>
<dbReference type="FunCoup" id="O13904">
    <property type="interactions" value="158"/>
</dbReference>
<dbReference type="STRING" id="284812.O13904"/>
<dbReference type="PaxDb" id="4896-SPAC22A12.13.1"/>
<dbReference type="EnsemblFungi" id="SPAC22A12.13.1">
    <property type="protein sequence ID" value="SPAC22A12.13.1:pep"/>
    <property type="gene ID" value="SPAC22A12.13"/>
</dbReference>
<dbReference type="GeneID" id="2541722"/>
<dbReference type="KEGG" id="spo:2541722"/>
<dbReference type="PomBase" id="SPAC22A12.13">
    <property type="gene designation" value="mug84"/>
</dbReference>
<dbReference type="VEuPathDB" id="FungiDB:SPAC22A12.13"/>
<dbReference type="eggNOG" id="KOG2257">
    <property type="taxonomic scope" value="Eukaryota"/>
</dbReference>
<dbReference type="HOGENOM" id="CLU_081616_1_1_1"/>
<dbReference type="InParanoid" id="O13904"/>
<dbReference type="OMA" id="KNIWNEG"/>
<dbReference type="PRO" id="PR:O13904"/>
<dbReference type="Proteomes" id="UP000002485">
    <property type="component" value="Chromosome I"/>
</dbReference>
<dbReference type="GO" id="GO:0005783">
    <property type="term" value="C:endoplasmic reticulum"/>
    <property type="evidence" value="ECO:0007005"/>
    <property type="project" value="PomBase"/>
</dbReference>
<dbReference type="GO" id="GO:0000506">
    <property type="term" value="C:glycosylphosphatidylinositol-N-acetylglucosaminyltransferase (GPI-GnT) complex"/>
    <property type="evidence" value="ECO:0000266"/>
    <property type="project" value="PomBase"/>
</dbReference>
<dbReference type="GO" id="GO:0006506">
    <property type="term" value="P:GPI anchor biosynthetic process"/>
    <property type="evidence" value="ECO:0000318"/>
    <property type="project" value="GO_Central"/>
</dbReference>
<dbReference type="GO" id="GO:0051321">
    <property type="term" value="P:meiotic cell cycle"/>
    <property type="evidence" value="ECO:0007669"/>
    <property type="project" value="UniProtKB-KW"/>
</dbReference>
<dbReference type="InterPro" id="IPR052263">
    <property type="entry name" value="GPI_Anchor_Biosynth"/>
</dbReference>
<dbReference type="InterPro" id="IPR013717">
    <property type="entry name" value="PIG-P"/>
</dbReference>
<dbReference type="PANTHER" id="PTHR46346">
    <property type="entry name" value="PHOSPHATIDYLINOSITOL N-ACETYLGLUCOSAMINYLTRANSFERASE SUBUNIT P"/>
    <property type="match status" value="1"/>
</dbReference>
<dbReference type="PANTHER" id="PTHR46346:SF1">
    <property type="entry name" value="PHOSPHATIDYLINOSITOL N-ACETYLGLUCOSAMINYLTRANSFERASE SUBUNIT P"/>
    <property type="match status" value="1"/>
</dbReference>
<dbReference type="Pfam" id="PF08510">
    <property type="entry name" value="PIG-P"/>
    <property type="match status" value="1"/>
</dbReference>
<evidence type="ECO:0000255" key="1"/>
<evidence type="ECO:0000269" key="2">
    <source>
    </source>
</evidence>
<evidence type="ECO:0000269" key="3">
    <source>
    </source>
</evidence>
<sequence>MTLTHHSTFIKGIEGSAEGEIEDVRQTTVFDPPFYGHPMLVPPSPSLTTMFRTRSTTPDEEGTAIAEIDQQDWDIMVKVPTYEYYGFVMYLVSMLGFGVYIVWALTPAPVLKFFEIHYYLSRWWALAIPTWLFVLVIYIHVVLNAYNTEVLTKPFSSLECIVDQYALVGEEDGAAHGRVVDLRLCDVNKQQLEET</sequence>
<gene>
    <name type="primary">mug84</name>
    <name type="ORF">SPAC22A12.13</name>
</gene>
<organism>
    <name type="scientific">Schizosaccharomyces pombe (strain 972 / ATCC 24843)</name>
    <name type="common">Fission yeast</name>
    <dbReference type="NCBI Taxonomy" id="284812"/>
    <lineage>
        <taxon>Eukaryota</taxon>
        <taxon>Fungi</taxon>
        <taxon>Dikarya</taxon>
        <taxon>Ascomycota</taxon>
        <taxon>Taphrinomycotina</taxon>
        <taxon>Schizosaccharomycetes</taxon>
        <taxon>Schizosaccharomycetales</taxon>
        <taxon>Schizosaccharomycetaceae</taxon>
        <taxon>Schizosaccharomyces</taxon>
    </lineage>
</organism>
<feature type="chain" id="PRO_0000278614" description="Meiotically up-regulated gene 84 protein">
    <location>
        <begin position="1"/>
        <end position="195"/>
    </location>
</feature>
<feature type="topological domain" description="Cytoplasmic" evidence="1">
    <location>
        <begin position="1"/>
        <end position="84"/>
    </location>
</feature>
<feature type="transmembrane region" description="Helical" evidence="1">
    <location>
        <begin position="85"/>
        <end position="105"/>
    </location>
</feature>
<feature type="topological domain" description="Lumenal" evidence="1">
    <location>
        <begin position="106"/>
        <end position="122"/>
    </location>
</feature>
<feature type="transmembrane region" description="Helical" evidence="1">
    <location>
        <begin position="123"/>
        <end position="143"/>
    </location>
</feature>
<feature type="topological domain" description="Cytoplasmic" evidence="1">
    <location>
        <begin position="144"/>
        <end position="195"/>
    </location>
</feature>
<name>MUG84_SCHPO</name>
<reference key="1">
    <citation type="journal article" date="2002" name="Nature">
        <title>The genome sequence of Schizosaccharomyces pombe.</title>
        <authorList>
            <person name="Wood V."/>
            <person name="Gwilliam R."/>
            <person name="Rajandream M.A."/>
            <person name="Lyne M.H."/>
            <person name="Lyne R."/>
            <person name="Stewart A."/>
            <person name="Sgouros J.G."/>
            <person name="Peat N."/>
            <person name="Hayles J."/>
            <person name="Baker S.G."/>
            <person name="Basham D."/>
            <person name="Bowman S."/>
            <person name="Brooks K."/>
            <person name="Brown D."/>
            <person name="Brown S."/>
            <person name="Chillingworth T."/>
            <person name="Churcher C.M."/>
            <person name="Collins M."/>
            <person name="Connor R."/>
            <person name="Cronin A."/>
            <person name="Davis P."/>
            <person name="Feltwell T."/>
            <person name="Fraser A."/>
            <person name="Gentles S."/>
            <person name="Goble A."/>
            <person name="Hamlin N."/>
            <person name="Harris D.E."/>
            <person name="Hidalgo J."/>
            <person name="Hodgson G."/>
            <person name="Holroyd S."/>
            <person name="Hornsby T."/>
            <person name="Howarth S."/>
            <person name="Huckle E.J."/>
            <person name="Hunt S."/>
            <person name="Jagels K."/>
            <person name="James K.D."/>
            <person name="Jones L."/>
            <person name="Jones M."/>
            <person name="Leather S."/>
            <person name="McDonald S."/>
            <person name="McLean J."/>
            <person name="Mooney P."/>
            <person name="Moule S."/>
            <person name="Mungall K.L."/>
            <person name="Murphy L.D."/>
            <person name="Niblett D."/>
            <person name="Odell C."/>
            <person name="Oliver K."/>
            <person name="O'Neil S."/>
            <person name="Pearson D."/>
            <person name="Quail M.A."/>
            <person name="Rabbinowitsch E."/>
            <person name="Rutherford K.M."/>
            <person name="Rutter S."/>
            <person name="Saunders D."/>
            <person name="Seeger K."/>
            <person name="Sharp S."/>
            <person name="Skelton J."/>
            <person name="Simmonds M.N."/>
            <person name="Squares R."/>
            <person name="Squares S."/>
            <person name="Stevens K."/>
            <person name="Taylor K."/>
            <person name="Taylor R.G."/>
            <person name="Tivey A."/>
            <person name="Walsh S.V."/>
            <person name="Warren T."/>
            <person name="Whitehead S."/>
            <person name="Woodward J.R."/>
            <person name="Volckaert G."/>
            <person name="Aert R."/>
            <person name="Robben J."/>
            <person name="Grymonprez B."/>
            <person name="Weltjens I."/>
            <person name="Vanstreels E."/>
            <person name="Rieger M."/>
            <person name="Schaefer M."/>
            <person name="Mueller-Auer S."/>
            <person name="Gabel C."/>
            <person name="Fuchs M."/>
            <person name="Duesterhoeft A."/>
            <person name="Fritzc C."/>
            <person name="Holzer E."/>
            <person name="Moestl D."/>
            <person name="Hilbert H."/>
            <person name="Borzym K."/>
            <person name="Langer I."/>
            <person name="Beck A."/>
            <person name="Lehrach H."/>
            <person name="Reinhardt R."/>
            <person name="Pohl T.M."/>
            <person name="Eger P."/>
            <person name="Zimmermann W."/>
            <person name="Wedler H."/>
            <person name="Wambutt R."/>
            <person name="Purnelle B."/>
            <person name="Goffeau A."/>
            <person name="Cadieu E."/>
            <person name="Dreano S."/>
            <person name="Gloux S."/>
            <person name="Lelaure V."/>
            <person name="Mottier S."/>
            <person name="Galibert F."/>
            <person name="Aves S.J."/>
            <person name="Xiang Z."/>
            <person name="Hunt C."/>
            <person name="Moore K."/>
            <person name="Hurst S.M."/>
            <person name="Lucas M."/>
            <person name="Rochet M."/>
            <person name="Gaillardin C."/>
            <person name="Tallada V.A."/>
            <person name="Garzon A."/>
            <person name="Thode G."/>
            <person name="Daga R.R."/>
            <person name="Cruzado L."/>
            <person name="Jimenez J."/>
            <person name="Sanchez M."/>
            <person name="del Rey F."/>
            <person name="Benito J."/>
            <person name="Dominguez A."/>
            <person name="Revuelta J.L."/>
            <person name="Moreno S."/>
            <person name="Armstrong J."/>
            <person name="Forsburg S.L."/>
            <person name="Cerutti L."/>
            <person name="Lowe T."/>
            <person name="McCombie W.R."/>
            <person name="Paulsen I."/>
            <person name="Potashkin J."/>
            <person name="Shpakovski G.V."/>
            <person name="Ussery D."/>
            <person name="Barrell B.G."/>
            <person name="Nurse P."/>
        </authorList>
    </citation>
    <scope>NUCLEOTIDE SEQUENCE [LARGE SCALE GENOMIC DNA]</scope>
    <source>
        <strain>972 / ATCC 24843</strain>
    </source>
</reference>
<reference key="2">
    <citation type="journal article" date="2011" name="Science">
        <title>Comparative functional genomics of the fission yeasts.</title>
        <authorList>
            <person name="Rhind N."/>
            <person name="Chen Z."/>
            <person name="Yassour M."/>
            <person name="Thompson D.A."/>
            <person name="Haas B.J."/>
            <person name="Habib N."/>
            <person name="Wapinski I."/>
            <person name="Roy S."/>
            <person name="Lin M.F."/>
            <person name="Heiman D.I."/>
            <person name="Young S.K."/>
            <person name="Furuya K."/>
            <person name="Guo Y."/>
            <person name="Pidoux A."/>
            <person name="Chen H.M."/>
            <person name="Robbertse B."/>
            <person name="Goldberg J.M."/>
            <person name="Aoki K."/>
            <person name="Bayne E.H."/>
            <person name="Berlin A.M."/>
            <person name="Desjardins C.A."/>
            <person name="Dobbs E."/>
            <person name="Dukaj L."/>
            <person name="Fan L."/>
            <person name="FitzGerald M.G."/>
            <person name="French C."/>
            <person name="Gujja S."/>
            <person name="Hansen K."/>
            <person name="Keifenheim D."/>
            <person name="Levin J.Z."/>
            <person name="Mosher R.A."/>
            <person name="Mueller C.A."/>
            <person name="Pfiffner J."/>
            <person name="Priest M."/>
            <person name="Russ C."/>
            <person name="Smialowska A."/>
            <person name="Swoboda P."/>
            <person name="Sykes S.M."/>
            <person name="Vaughn M."/>
            <person name="Vengrova S."/>
            <person name="Yoder R."/>
            <person name="Zeng Q."/>
            <person name="Allshire R."/>
            <person name="Baulcombe D."/>
            <person name="Birren B.W."/>
            <person name="Brown W."/>
            <person name="Ekwall K."/>
            <person name="Kellis M."/>
            <person name="Leatherwood J."/>
            <person name="Levin H."/>
            <person name="Margalit H."/>
            <person name="Martienssen R."/>
            <person name="Nieduszynski C.A."/>
            <person name="Spatafora J.W."/>
            <person name="Friedman N."/>
            <person name="Dalgaard J.Z."/>
            <person name="Baumann P."/>
            <person name="Niki H."/>
            <person name="Regev A."/>
            <person name="Nusbaum C."/>
        </authorList>
    </citation>
    <scope>REVISION OF GENE MODEL</scope>
</reference>
<reference key="3">
    <citation type="journal article" date="2005" name="Curr. Biol.">
        <title>A large-scale screen in S. pombe identifies seven novel genes required for critical meiotic events.</title>
        <authorList>
            <person name="Martin-Castellanos C."/>
            <person name="Blanco M."/>
            <person name="Rozalen A.E."/>
            <person name="Perez-Hidalgo L."/>
            <person name="Garcia A.I."/>
            <person name="Conde F."/>
            <person name="Mata J."/>
            <person name="Ellermeier C."/>
            <person name="Davis L."/>
            <person name="San-Segundo P."/>
            <person name="Smith G.R."/>
            <person name="Moreno S."/>
        </authorList>
    </citation>
    <scope>FUNCTION IN MEIOSIS</scope>
</reference>
<reference key="4">
    <citation type="journal article" date="2006" name="Nat. Biotechnol.">
        <title>ORFeome cloning and global analysis of protein localization in the fission yeast Schizosaccharomyces pombe.</title>
        <authorList>
            <person name="Matsuyama A."/>
            <person name="Arai R."/>
            <person name="Yashiroda Y."/>
            <person name="Shirai A."/>
            <person name="Kamata A."/>
            <person name="Sekido S."/>
            <person name="Kobayashi Y."/>
            <person name="Hashimoto A."/>
            <person name="Hamamoto M."/>
            <person name="Hiraoka Y."/>
            <person name="Horinouchi S."/>
            <person name="Yoshida M."/>
        </authorList>
    </citation>
    <scope>SUBCELLULAR LOCATION [LARGE SCALE ANALYSIS]</scope>
</reference>
<accession>O13904</accession>